<reference key="1">
    <citation type="submission" date="2007-11" db="EMBL/GenBank/DDBJ databases">
        <title>Complete sequence of Delftia acidovorans DSM 14801 / SPH-1.</title>
        <authorList>
            <person name="Copeland A."/>
            <person name="Lucas S."/>
            <person name="Lapidus A."/>
            <person name="Barry K."/>
            <person name="Glavina del Rio T."/>
            <person name="Dalin E."/>
            <person name="Tice H."/>
            <person name="Pitluck S."/>
            <person name="Lowry S."/>
            <person name="Clum A."/>
            <person name="Schmutz J."/>
            <person name="Larimer F."/>
            <person name="Land M."/>
            <person name="Hauser L."/>
            <person name="Kyrpides N."/>
            <person name="Kim E."/>
            <person name="Schleheck D."/>
            <person name="Richardson P."/>
        </authorList>
    </citation>
    <scope>NUCLEOTIDE SEQUENCE [LARGE SCALE GENOMIC DNA]</scope>
    <source>
        <strain>DSM 14801 / SPH-1</strain>
    </source>
</reference>
<accession>A9BPU6</accession>
<name>ATPG_DELAS</name>
<gene>
    <name evidence="1" type="primary">atpG</name>
    <name type="ordered locus">Daci_0419</name>
</gene>
<dbReference type="EMBL" id="CP000884">
    <property type="protein sequence ID" value="ABX33065.1"/>
    <property type="molecule type" value="Genomic_DNA"/>
</dbReference>
<dbReference type="RefSeq" id="WP_012202356.1">
    <property type="nucleotide sequence ID" value="NC_010002.1"/>
</dbReference>
<dbReference type="SMR" id="A9BPU6"/>
<dbReference type="STRING" id="398578.Daci_0419"/>
<dbReference type="GeneID" id="94689763"/>
<dbReference type="KEGG" id="dac:Daci_0419"/>
<dbReference type="eggNOG" id="COG0224">
    <property type="taxonomic scope" value="Bacteria"/>
</dbReference>
<dbReference type="HOGENOM" id="CLU_050669_0_1_4"/>
<dbReference type="Proteomes" id="UP000000784">
    <property type="component" value="Chromosome"/>
</dbReference>
<dbReference type="GO" id="GO:0005886">
    <property type="term" value="C:plasma membrane"/>
    <property type="evidence" value="ECO:0007669"/>
    <property type="project" value="UniProtKB-SubCell"/>
</dbReference>
<dbReference type="GO" id="GO:0045259">
    <property type="term" value="C:proton-transporting ATP synthase complex"/>
    <property type="evidence" value="ECO:0007669"/>
    <property type="project" value="UniProtKB-KW"/>
</dbReference>
<dbReference type="GO" id="GO:0005524">
    <property type="term" value="F:ATP binding"/>
    <property type="evidence" value="ECO:0007669"/>
    <property type="project" value="UniProtKB-UniRule"/>
</dbReference>
<dbReference type="GO" id="GO:0046933">
    <property type="term" value="F:proton-transporting ATP synthase activity, rotational mechanism"/>
    <property type="evidence" value="ECO:0007669"/>
    <property type="project" value="UniProtKB-UniRule"/>
</dbReference>
<dbReference type="GO" id="GO:0042777">
    <property type="term" value="P:proton motive force-driven plasma membrane ATP synthesis"/>
    <property type="evidence" value="ECO:0007669"/>
    <property type="project" value="UniProtKB-UniRule"/>
</dbReference>
<dbReference type="CDD" id="cd12151">
    <property type="entry name" value="F1-ATPase_gamma"/>
    <property type="match status" value="1"/>
</dbReference>
<dbReference type="FunFam" id="1.10.287.80:FF:000005">
    <property type="entry name" value="ATP synthase gamma chain"/>
    <property type="match status" value="1"/>
</dbReference>
<dbReference type="Gene3D" id="3.40.1380.10">
    <property type="match status" value="1"/>
</dbReference>
<dbReference type="Gene3D" id="1.10.287.80">
    <property type="entry name" value="ATP synthase, gamma subunit, helix hairpin domain"/>
    <property type="match status" value="1"/>
</dbReference>
<dbReference type="HAMAP" id="MF_00815">
    <property type="entry name" value="ATP_synth_gamma_bact"/>
    <property type="match status" value="1"/>
</dbReference>
<dbReference type="InterPro" id="IPR035968">
    <property type="entry name" value="ATP_synth_F1_ATPase_gsu"/>
</dbReference>
<dbReference type="InterPro" id="IPR000131">
    <property type="entry name" value="ATP_synth_F1_gsu"/>
</dbReference>
<dbReference type="InterPro" id="IPR023632">
    <property type="entry name" value="ATP_synth_F1_gsu_CS"/>
</dbReference>
<dbReference type="NCBIfam" id="TIGR01146">
    <property type="entry name" value="ATPsyn_F1gamma"/>
    <property type="match status" value="1"/>
</dbReference>
<dbReference type="NCBIfam" id="NF004144">
    <property type="entry name" value="PRK05621.1-1"/>
    <property type="match status" value="1"/>
</dbReference>
<dbReference type="PANTHER" id="PTHR11693">
    <property type="entry name" value="ATP SYNTHASE GAMMA CHAIN"/>
    <property type="match status" value="1"/>
</dbReference>
<dbReference type="PANTHER" id="PTHR11693:SF22">
    <property type="entry name" value="ATP SYNTHASE SUBUNIT GAMMA, MITOCHONDRIAL"/>
    <property type="match status" value="1"/>
</dbReference>
<dbReference type="Pfam" id="PF00231">
    <property type="entry name" value="ATP-synt"/>
    <property type="match status" value="1"/>
</dbReference>
<dbReference type="PRINTS" id="PR00126">
    <property type="entry name" value="ATPASEGAMMA"/>
</dbReference>
<dbReference type="SUPFAM" id="SSF52943">
    <property type="entry name" value="ATP synthase (F1-ATPase), gamma subunit"/>
    <property type="match status" value="1"/>
</dbReference>
<dbReference type="PROSITE" id="PS00153">
    <property type="entry name" value="ATPASE_GAMMA"/>
    <property type="match status" value="1"/>
</dbReference>
<keyword id="KW-0066">ATP synthesis</keyword>
<keyword id="KW-0997">Cell inner membrane</keyword>
<keyword id="KW-1003">Cell membrane</keyword>
<keyword id="KW-0139">CF(1)</keyword>
<keyword id="KW-0375">Hydrogen ion transport</keyword>
<keyword id="KW-0406">Ion transport</keyword>
<keyword id="KW-0472">Membrane</keyword>
<keyword id="KW-1185">Reference proteome</keyword>
<keyword id="KW-0813">Transport</keyword>
<sequence length="290" mass="31186">MAAGKEIRGKIKSVENTKKITKAMEMVAASKMRKAQERMLAARPYSEKIRNIAVHLGQANPEYVHPFMQVNGDAKTAGVIVVTTDKGLCGGMNTNVLRAVTAKLRELQDQGVSAEAVAIGNKGLGFLNRVGAKVVSHATGLGDTPHLEKLIGPVKVLLDAYAAGKLSAVYLSYTKFINTMKQESVVEQLLPLSSESMQAEKTSGHSWDYIYEPDAQSVIDELLVRYAESLVYQAVAENMASEQSARMVAMKAATDNAGNVISELKLVYNKTRQAAITTELSEIVAGAAAV</sequence>
<protein>
    <recommendedName>
        <fullName evidence="1">ATP synthase gamma chain</fullName>
    </recommendedName>
    <alternativeName>
        <fullName evidence="1">ATP synthase F1 sector gamma subunit</fullName>
    </alternativeName>
    <alternativeName>
        <fullName evidence="1">F-ATPase gamma subunit</fullName>
    </alternativeName>
</protein>
<evidence type="ECO:0000255" key="1">
    <source>
        <dbReference type="HAMAP-Rule" id="MF_00815"/>
    </source>
</evidence>
<organism>
    <name type="scientific">Delftia acidovorans (strain DSM 14801 / SPH-1)</name>
    <dbReference type="NCBI Taxonomy" id="398578"/>
    <lineage>
        <taxon>Bacteria</taxon>
        <taxon>Pseudomonadati</taxon>
        <taxon>Pseudomonadota</taxon>
        <taxon>Betaproteobacteria</taxon>
        <taxon>Burkholderiales</taxon>
        <taxon>Comamonadaceae</taxon>
        <taxon>Delftia</taxon>
    </lineage>
</organism>
<feature type="chain" id="PRO_1000134136" description="ATP synthase gamma chain">
    <location>
        <begin position="1"/>
        <end position="290"/>
    </location>
</feature>
<comment type="function">
    <text evidence="1">Produces ATP from ADP in the presence of a proton gradient across the membrane. The gamma chain is believed to be important in regulating ATPase activity and the flow of protons through the CF(0) complex.</text>
</comment>
<comment type="subunit">
    <text evidence="1">F-type ATPases have 2 components, CF(1) - the catalytic core - and CF(0) - the membrane proton channel. CF(1) has five subunits: alpha(3), beta(3), gamma(1), delta(1), epsilon(1). CF(0) has three main subunits: a, b and c.</text>
</comment>
<comment type="subcellular location">
    <subcellularLocation>
        <location evidence="1">Cell inner membrane</location>
        <topology evidence="1">Peripheral membrane protein</topology>
    </subcellularLocation>
</comment>
<comment type="similarity">
    <text evidence="1">Belongs to the ATPase gamma chain family.</text>
</comment>
<proteinExistence type="inferred from homology"/>